<evidence type="ECO:0000250" key="1"/>
<evidence type="ECO:0000250" key="2">
    <source>
        <dbReference type="UniProtKB" id="P82319"/>
    </source>
</evidence>
<evidence type="ECO:0000255" key="3"/>
<evidence type="ECO:0000269" key="4">
    <source>
    </source>
</evidence>
<name>DEF3_PAPHA</name>
<sequence length="32" mass="3730">RTCRCRLGRCSRRESYSGSCNINGRIYSLCCR</sequence>
<organism>
    <name type="scientific">Papio hamadryas</name>
    <name type="common">Hamadryas baboon</name>
    <dbReference type="NCBI Taxonomy" id="9557"/>
    <lineage>
        <taxon>Eukaryota</taxon>
        <taxon>Metazoa</taxon>
        <taxon>Chordata</taxon>
        <taxon>Craniata</taxon>
        <taxon>Vertebrata</taxon>
        <taxon>Euteleostomi</taxon>
        <taxon>Mammalia</taxon>
        <taxon>Eutheria</taxon>
        <taxon>Euarchontoglires</taxon>
        <taxon>Primates</taxon>
        <taxon>Haplorrhini</taxon>
        <taxon>Catarrhini</taxon>
        <taxon>Cercopithecidae</taxon>
        <taxon>Cercopithecinae</taxon>
        <taxon>Papio</taxon>
    </lineage>
</organism>
<feature type="chain" id="PRO_0000064333" description="Defensin-3">
    <location>
        <begin position="1"/>
        <end position="32"/>
    </location>
</feature>
<feature type="disulfide bond" evidence="1">
    <location>
        <begin position="3"/>
        <end position="31"/>
    </location>
</feature>
<feature type="disulfide bond" evidence="2">
    <location>
        <begin position="5"/>
        <end position="20"/>
    </location>
</feature>
<feature type="disulfide bond" evidence="1">
    <location>
        <begin position="10"/>
        <end position="30"/>
    </location>
</feature>
<proteinExistence type="evidence at protein level"/>
<protein>
    <recommendedName>
        <fullName>Defensin-3</fullName>
    </recommendedName>
    <alternativeName>
        <fullName>PhD3</fullName>
    </alternativeName>
</protein>
<reference key="1">
    <citation type="journal article" date="2006" name="Biochemistry (Mosc.)">
        <title>Alpha-defensins from blood leukocytes of the monkey Papio hamadryas.</title>
        <authorList>
            <person name="Tsvetkova E.V."/>
            <person name="Aleshina G.M."/>
            <person name="Shamova O.V."/>
            <person name="Leonova L.E."/>
            <person name="Lehrer R.I."/>
            <person name="Kokryakov V.N."/>
        </authorList>
    </citation>
    <scope>PROTEIN SEQUENCE</scope>
    <scope>FUNCTION</scope>
    <scope>MASS SPECTROMETRY</scope>
    <source>
        <tissue>Leukocyte</tissue>
    </source>
</reference>
<comment type="function">
    <text evidence="4">Has antibacterial activity against the Gram-negative bacterium E.coli and the Gram-positive bacteria L.monocytogenes and S.aureus. Has antifungal activity against C.albicans.</text>
</comment>
<comment type="subcellular location">
    <subcellularLocation>
        <location>Secreted</location>
    </subcellularLocation>
</comment>
<comment type="mass spectrometry" mass="3727.0" error="1.0" method="MALDI" evidence="4"/>
<comment type="similarity">
    <text evidence="3">Belongs to the alpha-defensin family.</text>
</comment>
<dbReference type="SMR" id="P84758"/>
<dbReference type="GO" id="GO:0005576">
    <property type="term" value="C:extracellular region"/>
    <property type="evidence" value="ECO:0007669"/>
    <property type="project" value="UniProtKB-SubCell"/>
</dbReference>
<dbReference type="GO" id="GO:0042742">
    <property type="term" value="P:defense response to bacterium"/>
    <property type="evidence" value="ECO:0007669"/>
    <property type="project" value="UniProtKB-KW"/>
</dbReference>
<dbReference type="GO" id="GO:0050832">
    <property type="term" value="P:defense response to fungus"/>
    <property type="evidence" value="ECO:0007669"/>
    <property type="project" value="UniProtKB-KW"/>
</dbReference>
<dbReference type="GO" id="GO:0031640">
    <property type="term" value="P:killing of cells of another organism"/>
    <property type="evidence" value="ECO:0007669"/>
    <property type="project" value="UniProtKB-KW"/>
</dbReference>
<dbReference type="InterPro" id="IPR006081">
    <property type="entry name" value="Alpha-defensin_C"/>
</dbReference>
<dbReference type="InterPro" id="IPR006080">
    <property type="entry name" value="Beta/alpha-defensin_C"/>
</dbReference>
<dbReference type="Pfam" id="PF00323">
    <property type="entry name" value="Defensin_1"/>
    <property type="match status" value="1"/>
</dbReference>
<dbReference type="SMART" id="SM00048">
    <property type="entry name" value="DEFSN"/>
    <property type="match status" value="1"/>
</dbReference>
<dbReference type="SUPFAM" id="SSF57392">
    <property type="entry name" value="Defensin-like"/>
    <property type="match status" value="1"/>
</dbReference>
<dbReference type="PROSITE" id="PS00269">
    <property type="entry name" value="DEFENSIN"/>
    <property type="match status" value="1"/>
</dbReference>
<accession>P84758</accession>
<keyword id="KW-0044">Antibiotic</keyword>
<keyword id="KW-0929">Antimicrobial</keyword>
<keyword id="KW-0211">Defensin</keyword>
<keyword id="KW-0903">Direct protein sequencing</keyword>
<keyword id="KW-1015">Disulfide bond</keyword>
<keyword id="KW-0295">Fungicide</keyword>
<keyword id="KW-0964">Secreted</keyword>